<reference key="1">
    <citation type="journal article" date="2007" name="PLoS ONE">
        <title>Complete genomic characterization of a pathogenic A.II strain of Francisella tularensis subspecies tularensis.</title>
        <authorList>
            <person name="Beckstrom-Sternberg S.M."/>
            <person name="Auerbach R.K."/>
            <person name="Godbole S."/>
            <person name="Pearson J.V."/>
            <person name="Beckstrom-Sternberg J.S."/>
            <person name="Deng Z."/>
            <person name="Munk C."/>
            <person name="Kubota K."/>
            <person name="Zhou Y."/>
            <person name="Bruce D."/>
            <person name="Noronha J."/>
            <person name="Scheuermann R.H."/>
            <person name="Wang A."/>
            <person name="Wei X."/>
            <person name="Wang J."/>
            <person name="Hao J."/>
            <person name="Wagner D.M."/>
            <person name="Brettin T.S."/>
            <person name="Brown N."/>
            <person name="Gilna P."/>
            <person name="Keim P.S."/>
        </authorList>
    </citation>
    <scope>NUCLEOTIDE SEQUENCE [LARGE SCALE GENOMIC DNA]</scope>
    <source>
        <strain>WY96-3418</strain>
    </source>
</reference>
<sequence length="193" mass="21894">MNNLEAILRLKTIDAAKKLLGHFLVSKYNNKILIGKIVETEAYLYNDPACHSYSNRTKRNSMMYAQAGTSYVYFTYGMHYCFNVVTADVGIGEAILIRALEPIAGIEQMQLNRSKTKLIDLCSGPAKLTQALNINLKDNGINLLDKDSSILLRYNNDLINEIDIVQTQRIGISKAKDMPYRFYIKDNIFVSKK</sequence>
<protein>
    <recommendedName>
        <fullName evidence="1">Putative 3-methyladenine DNA glycosylase</fullName>
        <ecNumber evidence="1">3.2.2.-</ecNumber>
    </recommendedName>
</protein>
<dbReference type="EC" id="3.2.2.-" evidence="1"/>
<dbReference type="EMBL" id="CP000608">
    <property type="protein sequence ID" value="ABO46878.1"/>
    <property type="molecule type" value="Genomic_DNA"/>
</dbReference>
<dbReference type="RefSeq" id="WP_003018833.1">
    <property type="nucleotide sequence ID" value="NC_009257.1"/>
</dbReference>
<dbReference type="SMR" id="A4IY77"/>
<dbReference type="KEGG" id="ftw:FTW_1062"/>
<dbReference type="HOGENOM" id="CLU_060471_0_2_6"/>
<dbReference type="GO" id="GO:0003905">
    <property type="term" value="F:alkylbase DNA N-glycosylase activity"/>
    <property type="evidence" value="ECO:0007669"/>
    <property type="project" value="InterPro"/>
</dbReference>
<dbReference type="GO" id="GO:0003677">
    <property type="term" value="F:DNA binding"/>
    <property type="evidence" value="ECO:0007669"/>
    <property type="project" value="InterPro"/>
</dbReference>
<dbReference type="GO" id="GO:0006284">
    <property type="term" value="P:base-excision repair"/>
    <property type="evidence" value="ECO:0007669"/>
    <property type="project" value="InterPro"/>
</dbReference>
<dbReference type="CDD" id="cd00540">
    <property type="entry name" value="AAG"/>
    <property type="match status" value="1"/>
</dbReference>
<dbReference type="FunFam" id="3.10.300.10:FF:000001">
    <property type="entry name" value="Putative 3-methyladenine DNA glycosylase"/>
    <property type="match status" value="1"/>
</dbReference>
<dbReference type="Gene3D" id="3.10.300.10">
    <property type="entry name" value="Methylpurine-DNA glycosylase (MPG)"/>
    <property type="match status" value="1"/>
</dbReference>
<dbReference type="HAMAP" id="MF_00527">
    <property type="entry name" value="3MGH"/>
    <property type="match status" value="1"/>
</dbReference>
<dbReference type="InterPro" id="IPR011034">
    <property type="entry name" value="Formyl_transferase-like_C_sf"/>
</dbReference>
<dbReference type="InterPro" id="IPR003180">
    <property type="entry name" value="MPG"/>
</dbReference>
<dbReference type="InterPro" id="IPR036995">
    <property type="entry name" value="MPG_sf"/>
</dbReference>
<dbReference type="NCBIfam" id="TIGR00567">
    <property type="entry name" value="3mg"/>
    <property type="match status" value="1"/>
</dbReference>
<dbReference type="NCBIfam" id="NF002003">
    <property type="entry name" value="PRK00802.1-3"/>
    <property type="match status" value="1"/>
</dbReference>
<dbReference type="PANTHER" id="PTHR10429">
    <property type="entry name" value="DNA-3-METHYLADENINE GLYCOSYLASE"/>
    <property type="match status" value="1"/>
</dbReference>
<dbReference type="PANTHER" id="PTHR10429:SF0">
    <property type="entry name" value="DNA-3-METHYLADENINE GLYCOSYLASE"/>
    <property type="match status" value="1"/>
</dbReference>
<dbReference type="Pfam" id="PF02245">
    <property type="entry name" value="Pur_DNA_glyco"/>
    <property type="match status" value="1"/>
</dbReference>
<dbReference type="SUPFAM" id="SSF50486">
    <property type="entry name" value="FMT C-terminal domain-like"/>
    <property type="match status" value="1"/>
</dbReference>
<accession>A4IY77</accession>
<feature type="chain" id="PRO_1000050989" description="Putative 3-methyladenine DNA glycosylase">
    <location>
        <begin position="1"/>
        <end position="193"/>
    </location>
</feature>
<evidence type="ECO:0000255" key="1">
    <source>
        <dbReference type="HAMAP-Rule" id="MF_00527"/>
    </source>
</evidence>
<organism>
    <name type="scientific">Francisella tularensis subsp. tularensis (strain WY96-3418)</name>
    <dbReference type="NCBI Taxonomy" id="418136"/>
    <lineage>
        <taxon>Bacteria</taxon>
        <taxon>Pseudomonadati</taxon>
        <taxon>Pseudomonadota</taxon>
        <taxon>Gammaproteobacteria</taxon>
        <taxon>Thiotrichales</taxon>
        <taxon>Francisellaceae</taxon>
        <taxon>Francisella</taxon>
    </lineage>
</organism>
<keyword id="KW-0227">DNA damage</keyword>
<keyword id="KW-0234">DNA repair</keyword>
<keyword id="KW-0378">Hydrolase</keyword>
<comment type="similarity">
    <text evidence="1">Belongs to the DNA glycosylase MPG family.</text>
</comment>
<name>3MGH_FRATW</name>
<gene>
    <name type="ordered locus">FTW_1062</name>
</gene>
<proteinExistence type="inferred from homology"/>